<name>PEBA_PROMT</name>
<reference key="1">
    <citation type="journal article" date="2007" name="PLoS Genet.">
        <title>Patterns and implications of gene gain and loss in the evolution of Prochlorococcus.</title>
        <authorList>
            <person name="Kettler G.C."/>
            <person name="Martiny A.C."/>
            <person name="Huang K."/>
            <person name="Zucker J."/>
            <person name="Coleman M.L."/>
            <person name="Rodrigue S."/>
            <person name="Chen F."/>
            <person name="Lapidus A."/>
            <person name="Ferriera S."/>
            <person name="Johnson J."/>
            <person name="Steglich C."/>
            <person name="Church G.M."/>
            <person name="Richardson P."/>
            <person name="Chisholm S.W."/>
        </authorList>
    </citation>
    <scope>NUCLEOTIDE SEQUENCE [LARGE SCALE GENOMIC DNA]</scope>
    <source>
        <strain>NATL2A</strain>
    </source>
</reference>
<proteinExistence type="inferred from homology"/>
<accession>Q46IM0</accession>
<sequence>MFNDLLSELTKNILEHGGKKLIVPNEFCECVSKQGNCKLNSWLWDVPGFRRWRVTRLDAGDRLQVLNSVAYPNEQNDMPIMGIDLLWFEKKQKLVAILDFQPLVQDKEYLDRYFDGLKSLKKSFNEFNSDMKSNIYDPTKYFSPWALFCKGGNFEAENILPKIFSSFLKCYWKNLDLSKANENHIKSQEVSILHIDYDKYSAEKDPAHGLFSGFFGKEWSEKYMKEFLFPLSLENINP</sequence>
<gene>
    <name evidence="1" type="primary">pebA</name>
    <name type="ordered locus">PMN2A_1168</name>
</gene>
<dbReference type="EC" id="1.3.7.2" evidence="1"/>
<dbReference type="EMBL" id="CP000095">
    <property type="protein sequence ID" value="AAZ58658.1"/>
    <property type="molecule type" value="Genomic_DNA"/>
</dbReference>
<dbReference type="RefSeq" id="WP_011295512.1">
    <property type="nucleotide sequence ID" value="NC_007335.2"/>
</dbReference>
<dbReference type="SMR" id="Q46IM0"/>
<dbReference type="STRING" id="59920.PMN2A_1168"/>
<dbReference type="KEGG" id="pmn:PMN2A_1168"/>
<dbReference type="HOGENOM" id="CLU_086208_0_0_3"/>
<dbReference type="OrthoDB" id="527390at2"/>
<dbReference type="PhylomeDB" id="Q46IM0"/>
<dbReference type="Proteomes" id="UP000002535">
    <property type="component" value="Chromosome"/>
</dbReference>
<dbReference type="GO" id="GO:0050617">
    <property type="term" value="F:15,16-dihydrobiliverdin:ferredoxin oxidoreductase activity"/>
    <property type="evidence" value="ECO:0007669"/>
    <property type="project" value="UniProtKB-UniRule"/>
</dbReference>
<dbReference type="GO" id="GO:0050897">
    <property type="term" value="F:cobalt ion binding"/>
    <property type="evidence" value="ECO:0007669"/>
    <property type="project" value="InterPro"/>
</dbReference>
<dbReference type="GO" id="GO:0010024">
    <property type="term" value="P:phytochromobilin biosynthetic process"/>
    <property type="evidence" value="ECO:0007669"/>
    <property type="project" value="InterPro"/>
</dbReference>
<dbReference type="Gene3D" id="3.40.1500.20">
    <property type="match status" value="1"/>
</dbReference>
<dbReference type="HAMAP" id="MF_00792">
    <property type="entry name" value="PebA"/>
    <property type="match status" value="1"/>
</dbReference>
<dbReference type="InterPro" id="IPR023658">
    <property type="entry name" value="DiHydbiliverdin_OxRdtase"/>
</dbReference>
<dbReference type="InterPro" id="IPR009249">
    <property type="entry name" value="Ferredoxin-dep_bilin_Rdtase"/>
</dbReference>
<dbReference type="NCBIfam" id="NF009720">
    <property type="entry name" value="PRK13247.1"/>
    <property type="match status" value="1"/>
</dbReference>
<dbReference type="PANTHER" id="PTHR34557">
    <property type="entry name" value="PHYTOCHROMOBILIN:FERREDOXIN OXIDOREDUCTASE, CHLOROPLASTIC"/>
    <property type="match status" value="1"/>
</dbReference>
<dbReference type="PANTHER" id="PTHR34557:SF1">
    <property type="entry name" value="PHYTOCHROMOBILIN:FERREDOXIN OXIDOREDUCTASE, CHLOROPLASTIC"/>
    <property type="match status" value="1"/>
</dbReference>
<dbReference type="Pfam" id="PF05996">
    <property type="entry name" value="Fe_bilin_red"/>
    <property type="match status" value="1"/>
</dbReference>
<feature type="chain" id="PRO_1000046923" description="15,16-dihydrobiliverdin:ferredoxin oxidoreductase">
    <location>
        <begin position="1"/>
        <end position="238"/>
    </location>
</feature>
<protein>
    <recommendedName>
        <fullName evidence="1">15,16-dihydrobiliverdin:ferredoxin oxidoreductase</fullName>
        <ecNumber evidence="1">1.3.7.2</ecNumber>
    </recommendedName>
</protein>
<organism>
    <name type="scientific">Prochlorococcus marinus (strain NATL2A)</name>
    <dbReference type="NCBI Taxonomy" id="59920"/>
    <lineage>
        <taxon>Bacteria</taxon>
        <taxon>Bacillati</taxon>
        <taxon>Cyanobacteriota</taxon>
        <taxon>Cyanophyceae</taxon>
        <taxon>Synechococcales</taxon>
        <taxon>Prochlorococcaceae</taxon>
        <taxon>Prochlorococcus</taxon>
    </lineage>
</organism>
<evidence type="ECO:0000255" key="1">
    <source>
        <dbReference type="HAMAP-Rule" id="MF_00792"/>
    </source>
</evidence>
<comment type="function">
    <text evidence="1">Catalyzes the two-electron reduction of biliverdin IX-alpha at the C15 methine bridge.</text>
</comment>
<comment type="catalytic activity">
    <reaction evidence="1">
        <text>15,16-dihydrobiliverdin + oxidized 2[4Fe-4S]-[ferredoxin] = biliverdin IXalpha + reduced 2[4Fe-4S]-[ferredoxin] + 2 H(+)</text>
        <dbReference type="Rhea" id="RHEA:10168"/>
        <dbReference type="Rhea" id="RHEA-COMP:10002"/>
        <dbReference type="Rhea" id="RHEA-COMP:10004"/>
        <dbReference type="ChEBI" id="CHEBI:15378"/>
        <dbReference type="ChEBI" id="CHEBI:33722"/>
        <dbReference type="ChEBI" id="CHEBI:33723"/>
        <dbReference type="ChEBI" id="CHEBI:57899"/>
        <dbReference type="ChEBI" id="CHEBI:57991"/>
        <dbReference type="EC" id="1.3.7.2"/>
    </reaction>
</comment>
<comment type="similarity">
    <text evidence="1">Belongs to the HY2 family.</text>
</comment>
<keyword id="KW-0560">Oxidoreductase</keyword>
<keyword id="KW-1185">Reference proteome</keyword>